<reference key="1">
    <citation type="journal article" date="2013" name="Nat. Commun.">
        <title>The genome of Mesobuthus martensii reveals a unique adaptation model of arthropods.</title>
        <authorList>
            <person name="Cao Z."/>
            <person name="Yu Y."/>
            <person name="Wu Y."/>
            <person name="Hao P."/>
            <person name="Di Z."/>
            <person name="He Y."/>
            <person name="Chen Z."/>
            <person name="Yang W."/>
            <person name="Shen Z."/>
            <person name="He X."/>
            <person name="Sheng J."/>
            <person name="Xu X."/>
            <person name="Pan B."/>
            <person name="Feng J."/>
            <person name="Yang X."/>
            <person name="Hong W."/>
            <person name="Zhao W."/>
            <person name="Li Z."/>
            <person name="Huang K."/>
            <person name="Li T."/>
            <person name="Kong Y."/>
            <person name="Liu H."/>
            <person name="Jiang D."/>
            <person name="Zhang B."/>
            <person name="Hu J."/>
            <person name="Hu Y."/>
            <person name="Wang B."/>
            <person name="Dai J."/>
            <person name="Yuan B."/>
            <person name="Feng Y."/>
            <person name="Huang W."/>
            <person name="Xing X."/>
            <person name="Zhao G."/>
            <person name="Li X."/>
            <person name="Li Y."/>
            <person name="Li W."/>
        </authorList>
    </citation>
    <scope>NUCLEOTIDE SEQUENCE [LARGE SCALE GENOMIC DNA]</scope>
    <source>
        <tissue>Muscle</tissue>
    </source>
</reference>
<protein>
    <recommendedName>
        <fullName evidence="5">Defensin BmKDfsin1</fullName>
    </recommendedName>
</protein>
<evidence type="ECO:0000250" key="1">
    <source>
        <dbReference type="UniProtKB" id="A0A384E0Y8"/>
    </source>
</evidence>
<evidence type="ECO:0000250" key="2">
    <source>
        <dbReference type="UniProtKB" id="P0DQU0"/>
    </source>
</evidence>
<evidence type="ECO:0000255" key="3"/>
<evidence type="ECO:0000255" key="4">
    <source>
        <dbReference type="PROSITE-ProRule" id="PRU00710"/>
    </source>
</evidence>
<evidence type="ECO:0000303" key="5">
    <source>
    </source>
</evidence>
<evidence type="ECO:0000305" key="6">
    <source>
    </source>
</evidence>
<accession>P0DQT7</accession>
<sequence>MKTIVLLFVLVLVFALLVKMGMVEAEHGCPDNEDECHEHCKSIGKSGGYCVGPHKQTCRCN</sequence>
<proteinExistence type="inferred from homology"/>
<keyword id="KW-0044">Antibiotic</keyword>
<keyword id="KW-0929">Antimicrobial</keyword>
<keyword id="KW-1221">Calcium-activated potassium channel impairing toxin</keyword>
<keyword id="KW-0211">Defensin</keyword>
<keyword id="KW-1015">Disulfide bond</keyword>
<keyword id="KW-0391">Immunity</keyword>
<keyword id="KW-0399">Innate immunity</keyword>
<keyword id="KW-0872">Ion channel impairing toxin</keyword>
<keyword id="KW-0632">Potassium channel impairing toxin</keyword>
<keyword id="KW-0964">Secreted</keyword>
<keyword id="KW-0732">Signal</keyword>
<keyword id="KW-0800">Toxin</keyword>
<keyword id="KW-1220">Voltage-gated potassium channel impairing toxin</keyword>
<comment type="function">
    <text evidence="1 2">Antibacterial peptide active against Gram-positive bacteria, but not on Gram-negative bacteria (By similarity). Also has weak blocking activity on Kv1.1/KCNA1, Kv1.2/KCNA2, Kv1.3/KCNA3, KCa3.1/KCNN4/IK, KCa2.3/KCNN3/SK3 and Kv11.1/KCNH2/ERG1 channels (tested at 1 uM) (By similarity). It inhibits potassium channel current by interacting with the pore region (By similarity).</text>
</comment>
<comment type="subcellular location">
    <subcellularLocation>
        <location evidence="6">Secreted</location>
    </subcellularLocation>
</comment>
<comment type="tissue specificity">
    <text evidence="2">Highly expressed in non-venom gland (hemolymph) and moderately expressed in venom gland.</text>
</comment>
<comment type="similarity">
    <text evidence="4">Belongs to the invertebrate defensin family. Type 2 subfamily.</text>
</comment>
<dbReference type="SMR" id="P0DQT7"/>
<dbReference type="GO" id="GO:0005576">
    <property type="term" value="C:extracellular region"/>
    <property type="evidence" value="ECO:0007669"/>
    <property type="project" value="UniProtKB-SubCell"/>
</dbReference>
<dbReference type="GO" id="GO:0015459">
    <property type="term" value="F:potassium channel regulator activity"/>
    <property type="evidence" value="ECO:0007669"/>
    <property type="project" value="UniProtKB-KW"/>
</dbReference>
<dbReference type="GO" id="GO:0090729">
    <property type="term" value="F:toxin activity"/>
    <property type="evidence" value="ECO:0007669"/>
    <property type="project" value="UniProtKB-KW"/>
</dbReference>
<dbReference type="GO" id="GO:0042742">
    <property type="term" value="P:defense response to bacterium"/>
    <property type="evidence" value="ECO:0007669"/>
    <property type="project" value="UniProtKB-KW"/>
</dbReference>
<dbReference type="GO" id="GO:0045087">
    <property type="term" value="P:innate immune response"/>
    <property type="evidence" value="ECO:0007669"/>
    <property type="project" value="UniProtKB-KW"/>
</dbReference>
<dbReference type="Gene3D" id="3.30.30.10">
    <property type="entry name" value="Knottin, scorpion toxin-like"/>
    <property type="match status" value="1"/>
</dbReference>
<dbReference type="InterPro" id="IPR001542">
    <property type="entry name" value="Defensin_invertebrate/fungal"/>
</dbReference>
<dbReference type="InterPro" id="IPR036574">
    <property type="entry name" value="Scorpion_toxin-like_sf"/>
</dbReference>
<dbReference type="Pfam" id="PF01097">
    <property type="entry name" value="Defensin_2"/>
    <property type="match status" value="1"/>
</dbReference>
<dbReference type="SUPFAM" id="SSF57095">
    <property type="entry name" value="Scorpion toxin-like"/>
    <property type="match status" value="1"/>
</dbReference>
<dbReference type="PROSITE" id="PS51378">
    <property type="entry name" value="INVERT_DEFENSINS"/>
    <property type="match status" value="1"/>
</dbReference>
<organism>
    <name type="scientific">Olivierus martensii</name>
    <name type="common">Manchurian scorpion</name>
    <name type="synonym">Mesobuthus martensii</name>
    <dbReference type="NCBI Taxonomy" id="34649"/>
    <lineage>
        <taxon>Eukaryota</taxon>
        <taxon>Metazoa</taxon>
        <taxon>Ecdysozoa</taxon>
        <taxon>Arthropoda</taxon>
        <taxon>Chelicerata</taxon>
        <taxon>Arachnida</taxon>
        <taxon>Scorpiones</taxon>
        <taxon>Buthida</taxon>
        <taxon>Buthoidea</taxon>
        <taxon>Buthidae</taxon>
        <taxon>Olivierus</taxon>
    </lineage>
</organism>
<name>DEF1_OLIMR</name>
<feature type="signal peptide" evidence="3">
    <location>
        <begin position="1"/>
        <end position="25"/>
    </location>
</feature>
<feature type="chain" id="PRO_0000455525" description="Defensin BmKDfsin1" evidence="6">
    <location>
        <begin position="26"/>
        <end position="61"/>
    </location>
</feature>
<feature type="disulfide bond" evidence="1">
    <location>
        <begin position="29"/>
        <end position="50"/>
    </location>
</feature>
<feature type="disulfide bond" evidence="1">
    <location>
        <begin position="36"/>
        <end position="58"/>
    </location>
</feature>
<feature type="disulfide bond" evidence="1">
    <location>
        <begin position="40"/>
        <end position="60"/>
    </location>
</feature>